<feature type="chain" id="PRO_0000308673" description="CASP-like protein 1C1">
    <location>
        <begin position="1"/>
        <end position="164"/>
    </location>
</feature>
<feature type="topological domain" description="Cytoplasmic" evidence="2">
    <location>
        <begin position="1"/>
        <end position="7"/>
    </location>
</feature>
<feature type="transmembrane region" description="Helical" evidence="2">
    <location>
        <begin position="8"/>
        <end position="28"/>
    </location>
</feature>
<feature type="topological domain" description="Extracellular" evidence="2">
    <location>
        <begin position="29"/>
        <end position="51"/>
    </location>
</feature>
<feature type="transmembrane region" description="Helical" evidence="2">
    <location>
        <begin position="52"/>
        <end position="72"/>
    </location>
</feature>
<feature type="topological domain" description="Cytoplasmic" evidence="2">
    <location>
        <begin position="73"/>
        <end position="80"/>
    </location>
</feature>
<feature type="transmembrane region" description="Helical" evidence="2">
    <location>
        <begin position="81"/>
        <end position="101"/>
    </location>
</feature>
<feature type="topological domain" description="Extracellular" evidence="2">
    <location>
        <begin position="102"/>
        <end position="129"/>
    </location>
</feature>
<feature type="transmembrane region" description="Helical" evidence="2">
    <location>
        <begin position="130"/>
        <end position="150"/>
    </location>
</feature>
<feature type="topological domain" description="Cytoplasmic" evidence="2">
    <location>
        <begin position="151"/>
        <end position="164"/>
    </location>
</feature>
<protein>
    <recommendedName>
        <fullName>CASP-like protein 1C1</fullName>
        <shortName>AtCASPL1C1</shortName>
    </recommendedName>
</protein>
<dbReference type="EMBL" id="AC005142">
    <property type="protein sequence ID" value="AAD15310.1"/>
    <property type="molecule type" value="Genomic_DNA"/>
</dbReference>
<dbReference type="EMBL" id="AF071527">
    <property type="protein sequence ID" value="AAD11596.1"/>
    <property type="molecule type" value="Genomic_DNA"/>
</dbReference>
<dbReference type="EMBL" id="AL161497">
    <property type="protein sequence ID" value="CAB77839.1"/>
    <property type="molecule type" value="Genomic_DNA"/>
</dbReference>
<dbReference type="EMBL" id="CP002687">
    <property type="protein sequence ID" value="AEE82335.1"/>
    <property type="molecule type" value="Genomic_DNA"/>
</dbReference>
<dbReference type="PIR" id="H85044">
    <property type="entry name" value="H85044"/>
</dbReference>
<dbReference type="RefSeq" id="NP_192263.1">
    <property type="nucleotide sequence ID" value="NM_116592.2"/>
</dbReference>
<dbReference type="SMR" id="Q9ZT81"/>
<dbReference type="PaxDb" id="3702-AT4G03540.1"/>
<dbReference type="EnsemblPlants" id="AT4G03540.1">
    <property type="protein sequence ID" value="AT4G03540.1"/>
    <property type="gene ID" value="AT4G03540"/>
</dbReference>
<dbReference type="GeneID" id="825651"/>
<dbReference type="Gramene" id="AT4G03540.1">
    <property type="protein sequence ID" value="AT4G03540.1"/>
    <property type="gene ID" value="AT4G03540"/>
</dbReference>
<dbReference type="KEGG" id="ath:AT4G03540"/>
<dbReference type="Araport" id="AT4G03540"/>
<dbReference type="TAIR" id="AT4G03540">
    <property type="gene designation" value="CASPL1C1"/>
</dbReference>
<dbReference type="eggNOG" id="ENOG502RZXX">
    <property type="taxonomic scope" value="Eukaryota"/>
</dbReference>
<dbReference type="HOGENOM" id="CLU_066104_3_0_1"/>
<dbReference type="InParanoid" id="Q9ZT81"/>
<dbReference type="OMA" id="PKFCDQI"/>
<dbReference type="PhylomeDB" id="Q9ZT81"/>
<dbReference type="PRO" id="PR:Q9ZT81"/>
<dbReference type="Proteomes" id="UP000006548">
    <property type="component" value="Chromosome 4"/>
</dbReference>
<dbReference type="ExpressionAtlas" id="Q9ZT81">
    <property type="expression patterns" value="baseline and differential"/>
</dbReference>
<dbReference type="GO" id="GO:0005886">
    <property type="term" value="C:plasma membrane"/>
    <property type="evidence" value="ECO:0007669"/>
    <property type="project" value="UniProtKB-SubCell"/>
</dbReference>
<dbReference type="InterPro" id="IPR006459">
    <property type="entry name" value="CASP/CASPL"/>
</dbReference>
<dbReference type="InterPro" id="IPR006702">
    <property type="entry name" value="CASP_dom"/>
</dbReference>
<dbReference type="InterPro" id="IPR044173">
    <property type="entry name" value="CASPL"/>
</dbReference>
<dbReference type="NCBIfam" id="TIGR01569">
    <property type="entry name" value="A_tha_TIGR01569"/>
    <property type="match status" value="1"/>
</dbReference>
<dbReference type="PANTHER" id="PTHR36488">
    <property type="entry name" value="CASP-LIKE PROTEIN 1U1"/>
    <property type="match status" value="1"/>
</dbReference>
<dbReference type="PANTHER" id="PTHR36488:SF8">
    <property type="entry name" value="CASP-LIKE PROTEIN 1U1"/>
    <property type="match status" value="1"/>
</dbReference>
<dbReference type="Pfam" id="PF04535">
    <property type="entry name" value="CASP_dom"/>
    <property type="match status" value="1"/>
</dbReference>
<comment type="subunit">
    <text evidence="1">Homodimer and heterodimers.</text>
</comment>
<comment type="subcellular location">
    <subcellularLocation>
        <location evidence="1">Cell membrane</location>
        <topology evidence="1">Multi-pass membrane protein</topology>
    </subcellularLocation>
</comment>
<comment type="tissue specificity">
    <text evidence="3">Expressed in the stele of the root.</text>
</comment>
<comment type="developmental stage">
    <text evidence="3">Expressed in the root maturation zone and, transiently, in emerged lateral roots.</text>
</comment>
<comment type="similarity">
    <text evidence="4">Belongs to the Casparian strip membrane proteins (CASP) family.</text>
</comment>
<proteinExistence type="evidence at transcript level"/>
<name>CSPLK_ARATH</name>
<organism>
    <name type="scientific">Arabidopsis thaliana</name>
    <name type="common">Mouse-ear cress</name>
    <dbReference type="NCBI Taxonomy" id="3702"/>
    <lineage>
        <taxon>Eukaryota</taxon>
        <taxon>Viridiplantae</taxon>
        <taxon>Streptophyta</taxon>
        <taxon>Embryophyta</taxon>
        <taxon>Tracheophyta</taxon>
        <taxon>Spermatophyta</taxon>
        <taxon>Magnoliopsida</taxon>
        <taxon>eudicotyledons</taxon>
        <taxon>Gunneridae</taxon>
        <taxon>Pentapetalae</taxon>
        <taxon>rosids</taxon>
        <taxon>malvids</taxon>
        <taxon>Brassicales</taxon>
        <taxon>Brassicaceae</taxon>
        <taxon>Camelineae</taxon>
        <taxon>Arabidopsis</taxon>
    </lineage>
</organism>
<keyword id="KW-1003">Cell membrane</keyword>
<keyword id="KW-0472">Membrane</keyword>
<keyword id="KW-1185">Reference proteome</keyword>
<keyword id="KW-0812">Transmembrane</keyword>
<keyword id="KW-1133">Transmembrane helix</keyword>
<accession>Q9ZT81</accession>
<evidence type="ECO:0000250" key="1"/>
<evidence type="ECO:0000255" key="2"/>
<evidence type="ECO:0000269" key="3">
    <source>
    </source>
</evidence>
<evidence type="ECO:0000305" key="4"/>
<gene>
    <name type="ordered locus">At4g03540</name>
    <name type="ORF">F9H3.17</name>
    <name type="ORF">T5L23.3</name>
</gene>
<sequence length="164" mass="17670">MVKLTKRIGGLVLRLAAFGAALAALIVMITSRERASFLAISLEAKYTDMAAFKYFVIANAVVSVYSFLVLFLPKESLLWKFVVVLDLVMTMLLTSSLSAALAVAQVGKKGNANAGWLPICGQVPKFCDQITGALIAGFVALVLYVLLLLYSLHAVVDPFLLQKS</sequence>
<reference key="1">
    <citation type="journal article" date="1999" name="Nature">
        <title>Sequence and analysis of chromosome 4 of the plant Arabidopsis thaliana.</title>
        <authorList>
            <person name="Mayer K.F.X."/>
            <person name="Schueller C."/>
            <person name="Wambutt R."/>
            <person name="Murphy G."/>
            <person name="Volckaert G."/>
            <person name="Pohl T."/>
            <person name="Duesterhoeft A."/>
            <person name="Stiekema W."/>
            <person name="Entian K.-D."/>
            <person name="Terryn N."/>
            <person name="Harris B."/>
            <person name="Ansorge W."/>
            <person name="Brandt P."/>
            <person name="Grivell L.A."/>
            <person name="Rieger M."/>
            <person name="Weichselgartner M."/>
            <person name="de Simone V."/>
            <person name="Obermaier B."/>
            <person name="Mache R."/>
            <person name="Mueller M."/>
            <person name="Kreis M."/>
            <person name="Delseny M."/>
            <person name="Puigdomenech P."/>
            <person name="Watson M."/>
            <person name="Schmidtheini T."/>
            <person name="Reichert B."/>
            <person name="Portetelle D."/>
            <person name="Perez-Alonso M."/>
            <person name="Boutry M."/>
            <person name="Bancroft I."/>
            <person name="Vos P."/>
            <person name="Hoheisel J."/>
            <person name="Zimmermann W."/>
            <person name="Wedler H."/>
            <person name="Ridley P."/>
            <person name="Langham S.-A."/>
            <person name="McCullagh B."/>
            <person name="Bilham L."/>
            <person name="Robben J."/>
            <person name="van der Schueren J."/>
            <person name="Grymonprez B."/>
            <person name="Chuang Y.-J."/>
            <person name="Vandenbussche F."/>
            <person name="Braeken M."/>
            <person name="Weltjens I."/>
            <person name="Voet M."/>
            <person name="Bastiaens I."/>
            <person name="Aert R."/>
            <person name="Defoor E."/>
            <person name="Weitzenegger T."/>
            <person name="Bothe G."/>
            <person name="Ramsperger U."/>
            <person name="Hilbert H."/>
            <person name="Braun M."/>
            <person name="Holzer E."/>
            <person name="Brandt A."/>
            <person name="Peters S."/>
            <person name="van Staveren M."/>
            <person name="Dirkse W."/>
            <person name="Mooijman P."/>
            <person name="Klein Lankhorst R."/>
            <person name="Rose M."/>
            <person name="Hauf J."/>
            <person name="Koetter P."/>
            <person name="Berneiser S."/>
            <person name="Hempel S."/>
            <person name="Feldpausch M."/>
            <person name="Lamberth S."/>
            <person name="Van den Daele H."/>
            <person name="De Keyser A."/>
            <person name="Buysshaert C."/>
            <person name="Gielen J."/>
            <person name="Villarroel R."/>
            <person name="De Clercq R."/>
            <person name="van Montagu M."/>
            <person name="Rogers J."/>
            <person name="Cronin A."/>
            <person name="Quail M.A."/>
            <person name="Bray-Allen S."/>
            <person name="Clark L."/>
            <person name="Doggett J."/>
            <person name="Hall S."/>
            <person name="Kay M."/>
            <person name="Lennard N."/>
            <person name="McLay K."/>
            <person name="Mayes R."/>
            <person name="Pettett A."/>
            <person name="Rajandream M.A."/>
            <person name="Lyne M."/>
            <person name="Benes V."/>
            <person name="Rechmann S."/>
            <person name="Borkova D."/>
            <person name="Bloecker H."/>
            <person name="Scharfe M."/>
            <person name="Grimm M."/>
            <person name="Loehnert T.-H."/>
            <person name="Dose S."/>
            <person name="de Haan M."/>
            <person name="Maarse A.C."/>
            <person name="Schaefer M."/>
            <person name="Mueller-Auer S."/>
            <person name="Gabel C."/>
            <person name="Fuchs M."/>
            <person name="Fartmann B."/>
            <person name="Granderath K."/>
            <person name="Dauner D."/>
            <person name="Herzl A."/>
            <person name="Neumann S."/>
            <person name="Argiriou A."/>
            <person name="Vitale D."/>
            <person name="Liguori R."/>
            <person name="Piravandi E."/>
            <person name="Massenet O."/>
            <person name="Quigley F."/>
            <person name="Clabauld G."/>
            <person name="Muendlein A."/>
            <person name="Felber R."/>
            <person name="Schnabl S."/>
            <person name="Hiller R."/>
            <person name="Schmidt W."/>
            <person name="Lecharny A."/>
            <person name="Aubourg S."/>
            <person name="Chefdor F."/>
            <person name="Cooke R."/>
            <person name="Berger C."/>
            <person name="Monfort A."/>
            <person name="Casacuberta E."/>
            <person name="Gibbons T."/>
            <person name="Weber N."/>
            <person name="Vandenbol M."/>
            <person name="Bargues M."/>
            <person name="Terol J."/>
            <person name="Torres A."/>
            <person name="Perez-Perez A."/>
            <person name="Purnelle B."/>
            <person name="Bent E."/>
            <person name="Johnson S."/>
            <person name="Tacon D."/>
            <person name="Jesse T."/>
            <person name="Heijnen L."/>
            <person name="Schwarz S."/>
            <person name="Scholler P."/>
            <person name="Heber S."/>
            <person name="Francs P."/>
            <person name="Bielke C."/>
            <person name="Frishman D."/>
            <person name="Haase D."/>
            <person name="Lemcke K."/>
            <person name="Mewes H.-W."/>
            <person name="Stocker S."/>
            <person name="Zaccaria P."/>
            <person name="Bevan M."/>
            <person name="Wilson R.K."/>
            <person name="de la Bastide M."/>
            <person name="Habermann K."/>
            <person name="Parnell L."/>
            <person name="Dedhia N."/>
            <person name="Gnoj L."/>
            <person name="Schutz K."/>
            <person name="Huang E."/>
            <person name="Spiegel L."/>
            <person name="Sekhon M."/>
            <person name="Murray J."/>
            <person name="Sheet P."/>
            <person name="Cordes M."/>
            <person name="Abu-Threideh J."/>
            <person name="Stoneking T."/>
            <person name="Kalicki J."/>
            <person name="Graves T."/>
            <person name="Harmon G."/>
            <person name="Edwards J."/>
            <person name="Latreille P."/>
            <person name="Courtney L."/>
            <person name="Cloud J."/>
            <person name="Abbott A."/>
            <person name="Scott K."/>
            <person name="Johnson D."/>
            <person name="Minx P."/>
            <person name="Bentley D."/>
            <person name="Fulton B."/>
            <person name="Miller N."/>
            <person name="Greco T."/>
            <person name="Kemp K."/>
            <person name="Kramer J."/>
            <person name="Fulton L."/>
            <person name="Mardis E."/>
            <person name="Dante M."/>
            <person name="Pepin K."/>
            <person name="Hillier L.W."/>
            <person name="Nelson J."/>
            <person name="Spieth J."/>
            <person name="Ryan E."/>
            <person name="Andrews S."/>
            <person name="Geisel C."/>
            <person name="Layman D."/>
            <person name="Du H."/>
            <person name="Ali J."/>
            <person name="Berghoff A."/>
            <person name="Jones K."/>
            <person name="Drone K."/>
            <person name="Cotton M."/>
            <person name="Joshu C."/>
            <person name="Antonoiu B."/>
            <person name="Zidanic M."/>
            <person name="Strong C."/>
            <person name="Sun H."/>
            <person name="Lamar B."/>
            <person name="Yordan C."/>
            <person name="Ma P."/>
            <person name="Zhong J."/>
            <person name="Preston R."/>
            <person name="Vil D."/>
            <person name="Shekher M."/>
            <person name="Matero A."/>
            <person name="Shah R."/>
            <person name="Swaby I.K."/>
            <person name="O'Shaughnessy A."/>
            <person name="Rodriguez M."/>
            <person name="Hoffman J."/>
            <person name="Till S."/>
            <person name="Granat S."/>
            <person name="Shohdy N."/>
            <person name="Hasegawa A."/>
            <person name="Hameed A."/>
            <person name="Lodhi M."/>
            <person name="Johnson A."/>
            <person name="Chen E."/>
            <person name="Marra M.A."/>
            <person name="Martienssen R."/>
            <person name="McCombie W.R."/>
        </authorList>
    </citation>
    <scope>NUCLEOTIDE SEQUENCE [LARGE SCALE GENOMIC DNA]</scope>
    <source>
        <strain>cv. Columbia</strain>
    </source>
</reference>
<reference key="2">
    <citation type="journal article" date="2017" name="Plant J.">
        <title>Araport11: a complete reannotation of the Arabidopsis thaliana reference genome.</title>
        <authorList>
            <person name="Cheng C.Y."/>
            <person name="Krishnakumar V."/>
            <person name="Chan A.P."/>
            <person name="Thibaud-Nissen F."/>
            <person name="Schobel S."/>
            <person name="Town C.D."/>
        </authorList>
    </citation>
    <scope>GENOME REANNOTATION</scope>
    <source>
        <strain>cv. Columbia</strain>
    </source>
</reference>
<reference key="3">
    <citation type="journal article" date="2014" name="Plant Physiol.">
        <title>Functional and evolutionary analysis of the CASPARIAN STRIP MEMBRANE DOMAIN PROTEIN family.</title>
        <authorList>
            <person name="Roppolo D."/>
            <person name="Boeckmann B."/>
            <person name="Pfister A."/>
            <person name="Boutet E."/>
            <person name="Rubio M.C."/>
            <person name="Denervaud-Tendon V."/>
            <person name="Vermeer J.E."/>
            <person name="Gheyselinck J."/>
            <person name="Xenarios I."/>
            <person name="Geldner N."/>
        </authorList>
    </citation>
    <scope>TISSUE SPECIFICITY</scope>
    <scope>DEVELOPMENTAL STAGE</scope>
    <scope>GENE FAMILY</scope>
    <scope>NOMENCLATURE</scope>
</reference>